<evidence type="ECO:0000255" key="1">
    <source>
        <dbReference type="HAMAP-Rule" id="MF_00244"/>
    </source>
</evidence>
<sequence>MKKIVLYGGQFNPIHTAHMIVASEVFHELQPDEFYFLPSFMSPLKKHNNFIDVQHRLTMIQMIIDELGFGDICDDEIKRGGQSYTYDTIKAFKEQHKDSELYFVIGTDQYNQLEKWYQIEYLKEMVTFVVVNRDKNSQNVENAMIAIQIPRVDISSTMIRQRVSEGKSIQVLVPKSVENYIKGEGLYEH</sequence>
<reference key="1">
    <citation type="journal article" date="2001" name="Lancet">
        <title>Whole genome sequencing of meticillin-resistant Staphylococcus aureus.</title>
        <authorList>
            <person name="Kuroda M."/>
            <person name="Ohta T."/>
            <person name="Uchiyama I."/>
            <person name="Baba T."/>
            <person name="Yuzawa H."/>
            <person name="Kobayashi I."/>
            <person name="Cui L."/>
            <person name="Oguchi A."/>
            <person name="Aoki K."/>
            <person name="Nagai Y."/>
            <person name="Lian J.-Q."/>
            <person name="Ito T."/>
            <person name="Kanamori M."/>
            <person name="Matsumaru H."/>
            <person name="Maruyama A."/>
            <person name="Murakami H."/>
            <person name="Hosoyama A."/>
            <person name="Mizutani-Ui Y."/>
            <person name="Takahashi N.K."/>
            <person name="Sawano T."/>
            <person name="Inoue R."/>
            <person name="Kaito C."/>
            <person name="Sekimizu K."/>
            <person name="Hirakawa H."/>
            <person name="Kuhara S."/>
            <person name="Goto S."/>
            <person name="Yabuzaki J."/>
            <person name="Kanehisa M."/>
            <person name="Yamashita A."/>
            <person name="Oshima K."/>
            <person name="Furuya K."/>
            <person name="Yoshino C."/>
            <person name="Shiba T."/>
            <person name="Hattori M."/>
            <person name="Ogasawara N."/>
            <person name="Hayashi H."/>
            <person name="Hiramatsu K."/>
        </authorList>
    </citation>
    <scope>NUCLEOTIDE SEQUENCE [LARGE SCALE GENOMIC DNA]</scope>
    <source>
        <strain>N315</strain>
    </source>
</reference>
<gene>
    <name evidence="1" type="primary">nadD</name>
    <name type="ordered locus">SA1422</name>
</gene>
<protein>
    <recommendedName>
        <fullName evidence="1">Probable nicotinate-nucleotide adenylyltransferase</fullName>
        <ecNumber evidence="1">2.7.7.18</ecNumber>
    </recommendedName>
    <alternativeName>
        <fullName evidence="1">Deamido-NAD(+) diphosphorylase</fullName>
    </alternativeName>
    <alternativeName>
        <fullName evidence="1">Deamido-NAD(+) pyrophosphorylase</fullName>
    </alternativeName>
    <alternativeName>
        <fullName evidence="1">Nicotinate mononucleotide adenylyltransferase</fullName>
        <shortName evidence="1">NaMN adenylyltransferase</shortName>
    </alternativeName>
</protein>
<keyword id="KW-0067">ATP-binding</keyword>
<keyword id="KW-0520">NAD</keyword>
<keyword id="KW-0547">Nucleotide-binding</keyword>
<keyword id="KW-0548">Nucleotidyltransferase</keyword>
<keyword id="KW-0662">Pyridine nucleotide biosynthesis</keyword>
<keyword id="KW-0808">Transferase</keyword>
<accession>P65502</accession>
<accession>Q99TQ5</accession>
<organism>
    <name type="scientific">Staphylococcus aureus (strain N315)</name>
    <dbReference type="NCBI Taxonomy" id="158879"/>
    <lineage>
        <taxon>Bacteria</taxon>
        <taxon>Bacillati</taxon>
        <taxon>Bacillota</taxon>
        <taxon>Bacilli</taxon>
        <taxon>Bacillales</taxon>
        <taxon>Staphylococcaceae</taxon>
        <taxon>Staphylococcus</taxon>
    </lineage>
</organism>
<comment type="function">
    <text evidence="1">Catalyzes the reversible adenylation of nicotinate mononucleotide (NaMN) to nicotinic acid adenine dinucleotide (NaAD).</text>
</comment>
<comment type="catalytic activity">
    <reaction evidence="1">
        <text>nicotinate beta-D-ribonucleotide + ATP + H(+) = deamido-NAD(+) + diphosphate</text>
        <dbReference type="Rhea" id="RHEA:22860"/>
        <dbReference type="ChEBI" id="CHEBI:15378"/>
        <dbReference type="ChEBI" id="CHEBI:30616"/>
        <dbReference type="ChEBI" id="CHEBI:33019"/>
        <dbReference type="ChEBI" id="CHEBI:57502"/>
        <dbReference type="ChEBI" id="CHEBI:58437"/>
        <dbReference type="EC" id="2.7.7.18"/>
    </reaction>
</comment>
<comment type="pathway">
    <text evidence="1">Cofactor biosynthesis; NAD(+) biosynthesis; deamido-NAD(+) from nicotinate D-ribonucleotide: step 1/1.</text>
</comment>
<comment type="similarity">
    <text evidence="1">Belongs to the NadD family.</text>
</comment>
<feature type="chain" id="PRO_0000181445" description="Probable nicotinate-nucleotide adenylyltransferase">
    <location>
        <begin position="1"/>
        <end position="189"/>
    </location>
</feature>
<proteinExistence type="inferred from homology"/>
<name>NADD_STAAN</name>
<dbReference type="EC" id="2.7.7.18" evidence="1"/>
<dbReference type="EMBL" id="BA000018">
    <property type="protein sequence ID" value="BAB42686.1"/>
    <property type="molecule type" value="Genomic_DNA"/>
</dbReference>
<dbReference type="PIR" id="A89941">
    <property type="entry name" value="A89941"/>
</dbReference>
<dbReference type="RefSeq" id="WP_000725167.1">
    <property type="nucleotide sequence ID" value="NC_002745.2"/>
</dbReference>
<dbReference type="SMR" id="P65502"/>
<dbReference type="BindingDB" id="P65502"/>
<dbReference type="ChEMBL" id="CHEMBL2146295"/>
<dbReference type="EnsemblBacteria" id="BAB42686">
    <property type="protein sequence ID" value="BAB42686"/>
    <property type="gene ID" value="BAB42686"/>
</dbReference>
<dbReference type="KEGG" id="sau:SA1422"/>
<dbReference type="HOGENOM" id="CLU_069765_3_1_9"/>
<dbReference type="BRENDA" id="2.7.7.18">
    <property type="organism ID" value="3352"/>
</dbReference>
<dbReference type="UniPathway" id="UPA00253">
    <property type="reaction ID" value="UER00332"/>
</dbReference>
<dbReference type="GO" id="GO:0005524">
    <property type="term" value="F:ATP binding"/>
    <property type="evidence" value="ECO:0007669"/>
    <property type="project" value="UniProtKB-KW"/>
</dbReference>
<dbReference type="GO" id="GO:0004515">
    <property type="term" value="F:nicotinate-nucleotide adenylyltransferase activity"/>
    <property type="evidence" value="ECO:0007669"/>
    <property type="project" value="UniProtKB-UniRule"/>
</dbReference>
<dbReference type="GO" id="GO:0009435">
    <property type="term" value="P:NAD biosynthetic process"/>
    <property type="evidence" value="ECO:0007669"/>
    <property type="project" value="UniProtKB-UniRule"/>
</dbReference>
<dbReference type="CDD" id="cd02165">
    <property type="entry name" value="NMNAT"/>
    <property type="match status" value="1"/>
</dbReference>
<dbReference type="FunFam" id="3.40.50.620:FF:000189">
    <property type="entry name" value="Probable nicotinate-nucleotide adenylyltransferase"/>
    <property type="match status" value="1"/>
</dbReference>
<dbReference type="Gene3D" id="3.40.50.620">
    <property type="entry name" value="HUPs"/>
    <property type="match status" value="1"/>
</dbReference>
<dbReference type="HAMAP" id="MF_00244">
    <property type="entry name" value="NaMN_adenylyltr"/>
    <property type="match status" value="1"/>
</dbReference>
<dbReference type="InterPro" id="IPR004821">
    <property type="entry name" value="Cyt_trans-like"/>
</dbReference>
<dbReference type="InterPro" id="IPR005248">
    <property type="entry name" value="NadD/NMNAT"/>
</dbReference>
<dbReference type="InterPro" id="IPR014729">
    <property type="entry name" value="Rossmann-like_a/b/a_fold"/>
</dbReference>
<dbReference type="NCBIfam" id="TIGR00482">
    <property type="entry name" value="nicotinate (nicotinamide) nucleotide adenylyltransferase"/>
    <property type="match status" value="1"/>
</dbReference>
<dbReference type="NCBIfam" id="NF000840">
    <property type="entry name" value="PRK00071.1-3"/>
    <property type="match status" value="1"/>
</dbReference>
<dbReference type="NCBIfam" id="NF000841">
    <property type="entry name" value="PRK00071.1-4"/>
    <property type="match status" value="1"/>
</dbReference>
<dbReference type="PANTHER" id="PTHR39321">
    <property type="entry name" value="NICOTINATE-NUCLEOTIDE ADENYLYLTRANSFERASE-RELATED"/>
    <property type="match status" value="1"/>
</dbReference>
<dbReference type="PANTHER" id="PTHR39321:SF3">
    <property type="entry name" value="PHOSPHOPANTETHEINE ADENYLYLTRANSFERASE"/>
    <property type="match status" value="1"/>
</dbReference>
<dbReference type="Pfam" id="PF01467">
    <property type="entry name" value="CTP_transf_like"/>
    <property type="match status" value="1"/>
</dbReference>
<dbReference type="SUPFAM" id="SSF52374">
    <property type="entry name" value="Nucleotidylyl transferase"/>
    <property type="match status" value="1"/>
</dbReference>